<comment type="function">
    <text evidence="1">An accessory protein needed during the final step in the assembly of 30S ribosomal subunit, possibly for assembly of the head region. Essential for efficient processing of 16S rRNA. May be needed both before and after RbfA during the maturation of 16S rRNA. It has affinity for free ribosomal 30S subunits but not for 70S ribosomes.</text>
</comment>
<comment type="subunit">
    <text evidence="1">Binds ribosomal protein uS19.</text>
</comment>
<comment type="subcellular location">
    <subcellularLocation>
        <location evidence="1">Cytoplasm</location>
    </subcellularLocation>
</comment>
<comment type="domain">
    <text evidence="1">The PRC barrel domain binds ribosomal protein uS19.</text>
</comment>
<comment type="similarity">
    <text evidence="1">Belongs to the RimM family.</text>
</comment>
<gene>
    <name evidence="1" type="primary">rimM</name>
    <name type="ordered locus">RPD_0508</name>
</gene>
<accession>Q13DU3</accession>
<sequence length="176" mass="18678">MPAGLICIARIGAPHGVRGAMRLWSFTAEPLAVMDYGPLATKDGARSFEIATARPAKDHLVVTLKGVATREEAERLNGLELYVPRDRLPPTEDGEYYHADLIGLPAITPAGEPLGRVLAIHNFGAGDIIEIAPPQGATLLLPFTNAVVPTVDLTAGHVVIELPTEIEGDTPNHPEA</sequence>
<feature type="chain" id="PRO_1000001223" description="Ribosome maturation factor RimM">
    <location>
        <begin position="1"/>
        <end position="176"/>
    </location>
</feature>
<feature type="domain" description="PRC barrel" evidence="1">
    <location>
        <begin position="93"/>
        <end position="170"/>
    </location>
</feature>
<reference key="1">
    <citation type="submission" date="2006-03" db="EMBL/GenBank/DDBJ databases">
        <title>Complete sequence of Rhodopseudomonas palustris BisB5.</title>
        <authorList>
            <consortium name="US DOE Joint Genome Institute"/>
            <person name="Copeland A."/>
            <person name="Lucas S."/>
            <person name="Lapidus A."/>
            <person name="Barry K."/>
            <person name="Detter J.C."/>
            <person name="Glavina del Rio T."/>
            <person name="Hammon N."/>
            <person name="Israni S."/>
            <person name="Dalin E."/>
            <person name="Tice H."/>
            <person name="Pitluck S."/>
            <person name="Chain P."/>
            <person name="Malfatti S."/>
            <person name="Shin M."/>
            <person name="Vergez L."/>
            <person name="Schmutz J."/>
            <person name="Larimer F."/>
            <person name="Land M."/>
            <person name="Hauser L."/>
            <person name="Pelletier D.A."/>
            <person name="Kyrpides N."/>
            <person name="Lykidis A."/>
            <person name="Oda Y."/>
            <person name="Harwood C.S."/>
            <person name="Richardson P."/>
        </authorList>
    </citation>
    <scope>NUCLEOTIDE SEQUENCE [LARGE SCALE GENOMIC DNA]</scope>
    <source>
        <strain>BisB5</strain>
    </source>
</reference>
<name>RIMM_RHOPS</name>
<dbReference type="EMBL" id="CP000283">
    <property type="protein sequence ID" value="ABE37746.1"/>
    <property type="molecule type" value="Genomic_DNA"/>
</dbReference>
<dbReference type="SMR" id="Q13DU3"/>
<dbReference type="STRING" id="316057.RPD_0508"/>
<dbReference type="KEGG" id="rpd:RPD_0508"/>
<dbReference type="eggNOG" id="COG0806">
    <property type="taxonomic scope" value="Bacteria"/>
</dbReference>
<dbReference type="HOGENOM" id="CLU_077636_0_1_5"/>
<dbReference type="BioCyc" id="RPAL316057:RPD_RS02605-MONOMER"/>
<dbReference type="Proteomes" id="UP000001818">
    <property type="component" value="Chromosome"/>
</dbReference>
<dbReference type="GO" id="GO:0005737">
    <property type="term" value="C:cytoplasm"/>
    <property type="evidence" value="ECO:0007669"/>
    <property type="project" value="UniProtKB-SubCell"/>
</dbReference>
<dbReference type="GO" id="GO:0005840">
    <property type="term" value="C:ribosome"/>
    <property type="evidence" value="ECO:0007669"/>
    <property type="project" value="InterPro"/>
</dbReference>
<dbReference type="GO" id="GO:0043022">
    <property type="term" value="F:ribosome binding"/>
    <property type="evidence" value="ECO:0007669"/>
    <property type="project" value="InterPro"/>
</dbReference>
<dbReference type="GO" id="GO:0042274">
    <property type="term" value="P:ribosomal small subunit biogenesis"/>
    <property type="evidence" value="ECO:0007669"/>
    <property type="project" value="UniProtKB-UniRule"/>
</dbReference>
<dbReference type="GO" id="GO:0006364">
    <property type="term" value="P:rRNA processing"/>
    <property type="evidence" value="ECO:0007669"/>
    <property type="project" value="UniProtKB-UniRule"/>
</dbReference>
<dbReference type="Gene3D" id="2.30.30.240">
    <property type="entry name" value="PRC-barrel domain"/>
    <property type="match status" value="1"/>
</dbReference>
<dbReference type="Gene3D" id="2.40.30.60">
    <property type="entry name" value="RimM"/>
    <property type="match status" value="1"/>
</dbReference>
<dbReference type="HAMAP" id="MF_00014">
    <property type="entry name" value="Ribosome_mat_RimM"/>
    <property type="match status" value="1"/>
</dbReference>
<dbReference type="InterPro" id="IPR011033">
    <property type="entry name" value="PRC_barrel-like_sf"/>
</dbReference>
<dbReference type="InterPro" id="IPR056792">
    <property type="entry name" value="PRC_RimM"/>
</dbReference>
<dbReference type="InterPro" id="IPR011961">
    <property type="entry name" value="RimM"/>
</dbReference>
<dbReference type="InterPro" id="IPR002676">
    <property type="entry name" value="RimM_N"/>
</dbReference>
<dbReference type="InterPro" id="IPR036976">
    <property type="entry name" value="RimM_N_sf"/>
</dbReference>
<dbReference type="InterPro" id="IPR009000">
    <property type="entry name" value="Transl_B-barrel_sf"/>
</dbReference>
<dbReference type="NCBIfam" id="TIGR02273">
    <property type="entry name" value="16S_RimM"/>
    <property type="match status" value="1"/>
</dbReference>
<dbReference type="PANTHER" id="PTHR33692">
    <property type="entry name" value="RIBOSOME MATURATION FACTOR RIMM"/>
    <property type="match status" value="1"/>
</dbReference>
<dbReference type="PANTHER" id="PTHR33692:SF1">
    <property type="entry name" value="RIBOSOME MATURATION FACTOR RIMM"/>
    <property type="match status" value="1"/>
</dbReference>
<dbReference type="Pfam" id="PF24986">
    <property type="entry name" value="PRC_RimM"/>
    <property type="match status" value="1"/>
</dbReference>
<dbReference type="Pfam" id="PF01782">
    <property type="entry name" value="RimM"/>
    <property type="match status" value="1"/>
</dbReference>
<dbReference type="SUPFAM" id="SSF50346">
    <property type="entry name" value="PRC-barrel domain"/>
    <property type="match status" value="1"/>
</dbReference>
<dbReference type="SUPFAM" id="SSF50447">
    <property type="entry name" value="Translation proteins"/>
    <property type="match status" value="1"/>
</dbReference>
<keyword id="KW-0143">Chaperone</keyword>
<keyword id="KW-0963">Cytoplasm</keyword>
<keyword id="KW-0690">Ribosome biogenesis</keyword>
<keyword id="KW-0698">rRNA processing</keyword>
<organism>
    <name type="scientific">Rhodopseudomonas palustris (strain BisB5)</name>
    <dbReference type="NCBI Taxonomy" id="316057"/>
    <lineage>
        <taxon>Bacteria</taxon>
        <taxon>Pseudomonadati</taxon>
        <taxon>Pseudomonadota</taxon>
        <taxon>Alphaproteobacteria</taxon>
        <taxon>Hyphomicrobiales</taxon>
        <taxon>Nitrobacteraceae</taxon>
        <taxon>Rhodopseudomonas</taxon>
    </lineage>
</organism>
<protein>
    <recommendedName>
        <fullName evidence="1">Ribosome maturation factor RimM</fullName>
    </recommendedName>
</protein>
<evidence type="ECO:0000255" key="1">
    <source>
        <dbReference type="HAMAP-Rule" id="MF_00014"/>
    </source>
</evidence>
<proteinExistence type="inferred from homology"/>